<protein>
    <recommendedName>
        <fullName evidence="1">Glycerol-3-phosphate dehydrogenase [NAD(P)+]</fullName>
        <ecNumber evidence="1">1.1.1.94</ecNumber>
    </recommendedName>
    <alternativeName>
        <fullName evidence="1">NAD(P)(+)-dependent glycerol-3-phosphate dehydrogenase</fullName>
    </alternativeName>
    <alternativeName>
        <fullName evidence="1">NAD(P)H-dependent dihydroxyacetone-phosphate reductase</fullName>
    </alternativeName>
</protein>
<organism>
    <name type="scientific">Streptococcus thermophilus (strain ATCC BAA-491 / LMD-9)</name>
    <dbReference type="NCBI Taxonomy" id="322159"/>
    <lineage>
        <taxon>Bacteria</taxon>
        <taxon>Bacillati</taxon>
        <taxon>Bacillota</taxon>
        <taxon>Bacilli</taxon>
        <taxon>Lactobacillales</taxon>
        <taxon>Streptococcaceae</taxon>
        <taxon>Streptococcus</taxon>
    </lineage>
</organism>
<feature type="chain" id="PRO_1000049564" description="Glycerol-3-phosphate dehydrogenase [NAD(P)+]">
    <location>
        <begin position="1"/>
        <end position="340"/>
    </location>
</feature>
<feature type="active site" description="Proton acceptor" evidence="1">
    <location>
        <position position="194"/>
    </location>
</feature>
<feature type="binding site" evidence="1">
    <location>
        <position position="13"/>
    </location>
    <ligand>
        <name>NADPH</name>
        <dbReference type="ChEBI" id="CHEBI:57783"/>
    </ligand>
</feature>
<feature type="binding site" evidence="1">
    <location>
        <position position="14"/>
    </location>
    <ligand>
        <name>NADPH</name>
        <dbReference type="ChEBI" id="CHEBI:57783"/>
    </ligand>
</feature>
<feature type="binding site" evidence="1">
    <location>
        <position position="108"/>
    </location>
    <ligand>
        <name>NADPH</name>
        <dbReference type="ChEBI" id="CHEBI:57783"/>
    </ligand>
</feature>
<feature type="binding site" evidence="1">
    <location>
        <position position="108"/>
    </location>
    <ligand>
        <name>sn-glycerol 3-phosphate</name>
        <dbReference type="ChEBI" id="CHEBI:57597"/>
    </ligand>
</feature>
<feature type="binding site" evidence="1">
    <location>
        <position position="139"/>
    </location>
    <ligand>
        <name>sn-glycerol 3-phosphate</name>
        <dbReference type="ChEBI" id="CHEBI:57597"/>
    </ligand>
</feature>
<feature type="binding site" evidence="1">
    <location>
        <position position="141"/>
    </location>
    <ligand>
        <name>sn-glycerol 3-phosphate</name>
        <dbReference type="ChEBI" id="CHEBI:57597"/>
    </ligand>
</feature>
<feature type="binding site" evidence="1">
    <location>
        <position position="143"/>
    </location>
    <ligand>
        <name>NADPH</name>
        <dbReference type="ChEBI" id="CHEBI:57783"/>
    </ligand>
</feature>
<feature type="binding site" evidence="1">
    <location>
        <position position="194"/>
    </location>
    <ligand>
        <name>sn-glycerol 3-phosphate</name>
        <dbReference type="ChEBI" id="CHEBI:57597"/>
    </ligand>
</feature>
<feature type="binding site" evidence="1">
    <location>
        <position position="247"/>
    </location>
    <ligand>
        <name>sn-glycerol 3-phosphate</name>
        <dbReference type="ChEBI" id="CHEBI:57597"/>
    </ligand>
</feature>
<feature type="binding site" evidence="1">
    <location>
        <position position="257"/>
    </location>
    <ligand>
        <name>sn-glycerol 3-phosphate</name>
        <dbReference type="ChEBI" id="CHEBI:57597"/>
    </ligand>
</feature>
<feature type="binding site" evidence="1">
    <location>
        <position position="258"/>
    </location>
    <ligand>
        <name>NADPH</name>
        <dbReference type="ChEBI" id="CHEBI:57783"/>
    </ligand>
</feature>
<feature type="binding site" evidence="1">
    <location>
        <position position="258"/>
    </location>
    <ligand>
        <name>sn-glycerol 3-phosphate</name>
        <dbReference type="ChEBI" id="CHEBI:57597"/>
    </ligand>
</feature>
<feature type="binding site" evidence="1">
    <location>
        <position position="259"/>
    </location>
    <ligand>
        <name>sn-glycerol 3-phosphate</name>
        <dbReference type="ChEBI" id="CHEBI:57597"/>
    </ligand>
</feature>
<feature type="binding site" evidence="1">
    <location>
        <position position="282"/>
    </location>
    <ligand>
        <name>NADPH</name>
        <dbReference type="ChEBI" id="CHEBI:57783"/>
    </ligand>
</feature>
<feature type="binding site" evidence="1">
    <location>
        <position position="284"/>
    </location>
    <ligand>
        <name>NADPH</name>
        <dbReference type="ChEBI" id="CHEBI:57783"/>
    </ligand>
</feature>
<gene>
    <name evidence="1" type="primary">gpsA</name>
    <name type="ordered locus">STER_1809</name>
</gene>
<keyword id="KW-0963">Cytoplasm</keyword>
<keyword id="KW-0444">Lipid biosynthesis</keyword>
<keyword id="KW-0443">Lipid metabolism</keyword>
<keyword id="KW-0520">NAD</keyword>
<keyword id="KW-0521">NADP</keyword>
<keyword id="KW-0547">Nucleotide-binding</keyword>
<keyword id="KW-0560">Oxidoreductase</keyword>
<keyword id="KW-0594">Phospholipid biosynthesis</keyword>
<keyword id="KW-1208">Phospholipid metabolism</keyword>
<evidence type="ECO:0000255" key="1">
    <source>
        <dbReference type="HAMAP-Rule" id="MF_00394"/>
    </source>
</evidence>
<name>GPDA_STRTD</name>
<accession>Q03IN5</accession>
<reference key="1">
    <citation type="journal article" date="2006" name="Proc. Natl. Acad. Sci. U.S.A.">
        <title>Comparative genomics of the lactic acid bacteria.</title>
        <authorList>
            <person name="Makarova K.S."/>
            <person name="Slesarev A."/>
            <person name="Wolf Y.I."/>
            <person name="Sorokin A."/>
            <person name="Mirkin B."/>
            <person name="Koonin E.V."/>
            <person name="Pavlov A."/>
            <person name="Pavlova N."/>
            <person name="Karamychev V."/>
            <person name="Polouchine N."/>
            <person name="Shakhova V."/>
            <person name="Grigoriev I."/>
            <person name="Lou Y."/>
            <person name="Rohksar D."/>
            <person name="Lucas S."/>
            <person name="Huang K."/>
            <person name="Goodstein D.M."/>
            <person name="Hawkins T."/>
            <person name="Plengvidhya V."/>
            <person name="Welker D."/>
            <person name="Hughes J."/>
            <person name="Goh Y."/>
            <person name="Benson A."/>
            <person name="Baldwin K."/>
            <person name="Lee J.-H."/>
            <person name="Diaz-Muniz I."/>
            <person name="Dosti B."/>
            <person name="Smeianov V."/>
            <person name="Wechter W."/>
            <person name="Barabote R."/>
            <person name="Lorca G."/>
            <person name="Altermann E."/>
            <person name="Barrangou R."/>
            <person name="Ganesan B."/>
            <person name="Xie Y."/>
            <person name="Rawsthorne H."/>
            <person name="Tamir D."/>
            <person name="Parker C."/>
            <person name="Breidt F."/>
            <person name="Broadbent J.R."/>
            <person name="Hutkins R."/>
            <person name="O'Sullivan D."/>
            <person name="Steele J."/>
            <person name="Unlu G."/>
            <person name="Saier M.H. Jr."/>
            <person name="Klaenhammer T."/>
            <person name="Richardson P."/>
            <person name="Kozyavkin S."/>
            <person name="Weimer B.C."/>
            <person name="Mills D.A."/>
        </authorList>
    </citation>
    <scope>NUCLEOTIDE SEQUENCE [LARGE SCALE GENOMIC DNA]</scope>
    <source>
        <strain>ATCC BAA-491 / LMD-9</strain>
    </source>
</reference>
<dbReference type="EC" id="1.1.1.94" evidence="1"/>
<dbReference type="EMBL" id="CP000419">
    <property type="protein sequence ID" value="ABJ66937.1"/>
    <property type="molecule type" value="Genomic_DNA"/>
</dbReference>
<dbReference type="RefSeq" id="WP_011681668.1">
    <property type="nucleotide sequence ID" value="NC_008532.1"/>
</dbReference>
<dbReference type="SMR" id="Q03IN5"/>
<dbReference type="KEGG" id="ste:STER_1809"/>
<dbReference type="HOGENOM" id="CLU_033449_0_2_9"/>
<dbReference type="UniPathway" id="UPA00940"/>
<dbReference type="GO" id="GO:0005829">
    <property type="term" value="C:cytosol"/>
    <property type="evidence" value="ECO:0007669"/>
    <property type="project" value="TreeGrafter"/>
</dbReference>
<dbReference type="GO" id="GO:0047952">
    <property type="term" value="F:glycerol-3-phosphate dehydrogenase [NAD(P)+] activity"/>
    <property type="evidence" value="ECO:0007669"/>
    <property type="project" value="UniProtKB-UniRule"/>
</dbReference>
<dbReference type="GO" id="GO:0051287">
    <property type="term" value="F:NAD binding"/>
    <property type="evidence" value="ECO:0007669"/>
    <property type="project" value="InterPro"/>
</dbReference>
<dbReference type="GO" id="GO:0005975">
    <property type="term" value="P:carbohydrate metabolic process"/>
    <property type="evidence" value="ECO:0007669"/>
    <property type="project" value="InterPro"/>
</dbReference>
<dbReference type="GO" id="GO:0046167">
    <property type="term" value="P:glycerol-3-phosphate biosynthetic process"/>
    <property type="evidence" value="ECO:0007669"/>
    <property type="project" value="UniProtKB-UniRule"/>
</dbReference>
<dbReference type="GO" id="GO:0046168">
    <property type="term" value="P:glycerol-3-phosphate catabolic process"/>
    <property type="evidence" value="ECO:0007669"/>
    <property type="project" value="InterPro"/>
</dbReference>
<dbReference type="GO" id="GO:0006650">
    <property type="term" value="P:glycerophospholipid metabolic process"/>
    <property type="evidence" value="ECO:0007669"/>
    <property type="project" value="UniProtKB-UniRule"/>
</dbReference>
<dbReference type="GO" id="GO:0008654">
    <property type="term" value="P:phospholipid biosynthetic process"/>
    <property type="evidence" value="ECO:0007669"/>
    <property type="project" value="UniProtKB-KW"/>
</dbReference>
<dbReference type="FunFam" id="1.10.1040.10:FF:000001">
    <property type="entry name" value="Glycerol-3-phosphate dehydrogenase [NAD(P)+]"/>
    <property type="match status" value="1"/>
</dbReference>
<dbReference type="FunFam" id="3.40.50.720:FF:000019">
    <property type="entry name" value="Glycerol-3-phosphate dehydrogenase [NAD(P)+]"/>
    <property type="match status" value="1"/>
</dbReference>
<dbReference type="Gene3D" id="1.10.1040.10">
    <property type="entry name" value="N-(1-d-carboxylethyl)-l-norvaline Dehydrogenase, domain 2"/>
    <property type="match status" value="1"/>
</dbReference>
<dbReference type="Gene3D" id="3.40.50.720">
    <property type="entry name" value="NAD(P)-binding Rossmann-like Domain"/>
    <property type="match status" value="1"/>
</dbReference>
<dbReference type="HAMAP" id="MF_00394">
    <property type="entry name" value="NAD_Glyc3P_dehydrog"/>
    <property type="match status" value="1"/>
</dbReference>
<dbReference type="InterPro" id="IPR008927">
    <property type="entry name" value="6-PGluconate_DH-like_C_sf"/>
</dbReference>
<dbReference type="InterPro" id="IPR013328">
    <property type="entry name" value="6PGD_dom2"/>
</dbReference>
<dbReference type="InterPro" id="IPR006168">
    <property type="entry name" value="G3P_DH_NAD-dep"/>
</dbReference>
<dbReference type="InterPro" id="IPR006109">
    <property type="entry name" value="G3P_DH_NAD-dep_C"/>
</dbReference>
<dbReference type="InterPro" id="IPR011128">
    <property type="entry name" value="G3P_DH_NAD-dep_N"/>
</dbReference>
<dbReference type="InterPro" id="IPR036291">
    <property type="entry name" value="NAD(P)-bd_dom_sf"/>
</dbReference>
<dbReference type="NCBIfam" id="NF000940">
    <property type="entry name" value="PRK00094.1-2"/>
    <property type="match status" value="1"/>
</dbReference>
<dbReference type="NCBIfam" id="NF000941">
    <property type="entry name" value="PRK00094.1-3"/>
    <property type="match status" value="1"/>
</dbReference>
<dbReference type="NCBIfam" id="NF000942">
    <property type="entry name" value="PRK00094.1-4"/>
    <property type="match status" value="1"/>
</dbReference>
<dbReference type="PANTHER" id="PTHR11728">
    <property type="entry name" value="GLYCEROL-3-PHOSPHATE DEHYDROGENASE"/>
    <property type="match status" value="1"/>
</dbReference>
<dbReference type="PANTHER" id="PTHR11728:SF1">
    <property type="entry name" value="GLYCEROL-3-PHOSPHATE DEHYDROGENASE [NAD(+)] 2, CHLOROPLASTIC"/>
    <property type="match status" value="1"/>
</dbReference>
<dbReference type="Pfam" id="PF07479">
    <property type="entry name" value="NAD_Gly3P_dh_C"/>
    <property type="match status" value="1"/>
</dbReference>
<dbReference type="Pfam" id="PF01210">
    <property type="entry name" value="NAD_Gly3P_dh_N"/>
    <property type="match status" value="1"/>
</dbReference>
<dbReference type="PIRSF" id="PIRSF000114">
    <property type="entry name" value="Glycerol-3-P_dh"/>
    <property type="match status" value="1"/>
</dbReference>
<dbReference type="PRINTS" id="PR00077">
    <property type="entry name" value="GPDHDRGNASE"/>
</dbReference>
<dbReference type="SUPFAM" id="SSF48179">
    <property type="entry name" value="6-phosphogluconate dehydrogenase C-terminal domain-like"/>
    <property type="match status" value="1"/>
</dbReference>
<dbReference type="SUPFAM" id="SSF51735">
    <property type="entry name" value="NAD(P)-binding Rossmann-fold domains"/>
    <property type="match status" value="1"/>
</dbReference>
<dbReference type="PROSITE" id="PS00957">
    <property type="entry name" value="NAD_G3PDH"/>
    <property type="match status" value="1"/>
</dbReference>
<sequence>MKKQKIAVLGPGSWGTALAQVLNDNGHEVRIWGNIPEQIDEINEKHTNTRYFKDVILDENIKAYKELSEALDSVNAILFVVPTKVTRLVAKQVAELLDHKVVVMHASKGLEPGTHERLSTILEEEIPSEMRSEIVVVSGPSHAEETIVRDITLITAASKDLETARYVQGIFSNSYFRLYTNSDVIGVETAGALKNIIAVGAGALHGMGYGDNAKAAIITRGLAEITRLGVKLGADPLTYSGLSGVGDLIVTGTSIHSRNWRAGYALGRGEKLEDIERNMGMVIEGISTTKVAYEIAQELGVYMPITTAIYKSIYEGADIKESILDMMSNELRSENEWDKK</sequence>
<proteinExistence type="inferred from homology"/>
<comment type="function">
    <text evidence="1">Catalyzes the reduction of the glycolytic intermediate dihydroxyacetone phosphate (DHAP) to sn-glycerol 3-phosphate (G3P), the key precursor for phospholipid synthesis.</text>
</comment>
<comment type="catalytic activity">
    <reaction evidence="1">
        <text>sn-glycerol 3-phosphate + NAD(+) = dihydroxyacetone phosphate + NADH + H(+)</text>
        <dbReference type="Rhea" id="RHEA:11092"/>
        <dbReference type="ChEBI" id="CHEBI:15378"/>
        <dbReference type="ChEBI" id="CHEBI:57540"/>
        <dbReference type="ChEBI" id="CHEBI:57597"/>
        <dbReference type="ChEBI" id="CHEBI:57642"/>
        <dbReference type="ChEBI" id="CHEBI:57945"/>
        <dbReference type="EC" id="1.1.1.94"/>
    </reaction>
    <physiologicalReaction direction="right-to-left" evidence="1">
        <dbReference type="Rhea" id="RHEA:11094"/>
    </physiologicalReaction>
</comment>
<comment type="catalytic activity">
    <reaction evidence="1">
        <text>sn-glycerol 3-phosphate + NADP(+) = dihydroxyacetone phosphate + NADPH + H(+)</text>
        <dbReference type="Rhea" id="RHEA:11096"/>
        <dbReference type="ChEBI" id="CHEBI:15378"/>
        <dbReference type="ChEBI" id="CHEBI:57597"/>
        <dbReference type="ChEBI" id="CHEBI:57642"/>
        <dbReference type="ChEBI" id="CHEBI:57783"/>
        <dbReference type="ChEBI" id="CHEBI:58349"/>
        <dbReference type="EC" id="1.1.1.94"/>
    </reaction>
    <physiologicalReaction direction="right-to-left" evidence="1">
        <dbReference type="Rhea" id="RHEA:11098"/>
    </physiologicalReaction>
</comment>
<comment type="pathway">
    <text evidence="1">Membrane lipid metabolism; glycerophospholipid metabolism.</text>
</comment>
<comment type="subcellular location">
    <subcellularLocation>
        <location evidence="1">Cytoplasm</location>
    </subcellularLocation>
</comment>
<comment type="similarity">
    <text evidence="1">Belongs to the NAD-dependent glycerol-3-phosphate dehydrogenase family.</text>
</comment>